<sequence>MIDRYKHQQLRIGLVSPQQISAWATKIIPNGEIVGEVTKPYTFHYKTNKPEKDGLFCERIFGPIKSGICACGNYRVIGDEKEDPKFCEQCGVEFVDSRIRRYQMGYIKLTCPVTHVWYLKRLPSYIANLLDKPLKELEGLVYCDFSFARPITKKPTFLRLRGSFEYEIQSWKYSIPLFFTTQGFDIFRNREISTGAGAIREQLADLDLRIIIENSLVEWKQLGEEGPTGNEWEDRKIVRRKDFLVRRMELAKHFIRTNIEPEWMVLCLLPVLPPELRPIIQIEGGKLMSSDINELYRRVIYRNNTLTDLLTTSRSTPGELVMCQEKLVQEAVDTLLDNGIRGQPMRDGHNKVYKSFSDVIEGKEGRFRETLLGKRVDYSGRSVIVVGPSLSLHRCGLPREIAIELFQTFVIRGLIRQHLASNIGVAKSQIREKKPIVWEILQEVMQGHPVLLNRAPTLHRLGIQSFQPILVEGRTICLHPLVCKGFNADFDGDQMAVHVPLSLEAQAEARLLMFSHMNLLSPAIGDPISVPTQDMLIGLYVLTSGTRRGISANRYNPCNRKNYQNERIYETHYKYTKEPFFCNSYDAIGAYRQKRINLDSPLWLRWQLDQRVIASREVPIEVHYESFGNYHEIYAHYLIVRSVKKETFCIYIRTTVGHISFYREIEEAIQGFSQACSYDT</sequence>
<comment type="function">
    <text evidence="1">DNA-dependent RNA polymerase catalyzes the transcription of DNA into RNA using the four ribonucleoside triphosphates as substrates.</text>
</comment>
<comment type="catalytic activity">
    <reaction evidence="1">
        <text>RNA(n) + a ribonucleoside 5'-triphosphate = RNA(n+1) + diphosphate</text>
        <dbReference type="Rhea" id="RHEA:21248"/>
        <dbReference type="Rhea" id="RHEA-COMP:14527"/>
        <dbReference type="Rhea" id="RHEA-COMP:17342"/>
        <dbReference type="ChEBI" id="CHEBI:33019"/>
        <dbReference type="ChEBI" id="CHEBI:61557"/>
        <dbReference type="ChEBI" id="CHEBI:140395"/>
        <dbReference type="EC" id="2.7.7.6"/>
    </reaction>
</comment>
<comment type="cofactor">
    <cofactor evidence="1">
        <name>Mg(2+)</name>
        <dbReference type="ChEBI" id="CHEBI:18420"/>
    </cofactor>
    <text evidence="1">Binds 1 Mg(2+) ion per subunit.</text>
</comment>
<comment type="cofactor">
    <cofactor evidence="1">
        <name>Zn(2+)</name>
        <dbReference type="ChEBI" id="CHEBI:29105"/>
    </cofactor>
    <text evidence="1">Binds 1 Zn(2+) ion per subunit.</text>
</comment>
<comment type="subunit">
    <text evidence="1">In plastids the minimal PEP RNA polymerase catalytic core is composed of four subunits: alpha, beta, beta', and beta''. When a (nuclear-encoded) sigma factor is associated with the core the holoenzyme is formed, which can initiate transcription.</text>
</comment>
<comment type="subcellular location">
    <subcellularLocation>
        <location evidence="1">Plastid</location>
        <location evidence="1">Chloroplast</location>
    </subcellularLocation>
</comment>
<comment type="similarity">
    <text evidence="1">Belongs to the RNA polymerase beta' chain family. RpoC1 subfamily.</text>
</comment>
<accession>A4QL97</accession>
<proteinExistence type="inferred from homology"/>
<organism>
    <name type="scientific">Lepidium virginicum</name>
    <name type="common">Virginia pepperweed</name>
    <dbReference type="NCBI Taxonomy" id="59292"/>
    <lineage>
        <taxon>Eukaryota</taxon>
        <taxon>Viridiplantae</taxon>
        <taxon>Streptophyta</taxon>
        <taxon>Embryophyta</taxon>
        <taxon>Tracheophyta</taxon>
        <taxon>Spermatophyta</taxon>
        <taxon>Magnoliopsida</taxon>
        <taxon>eudicotyledons</taxon>
        <taxon>Gunneridae</taxon>
        <taxon>Pentapetalae</taxon>
        <taxon>rosids</taxon>
        <taxon>malvids</taxon>
        <taxon>Brassicales</taxon>
        <taxon>Brassicaceae</taxon>
        <taxon>Lepidieae</taxon>
        <taxon>Lepidium</taxon>
    </lineage>
</organism>
<geneLocation type="chloroplast"/>
<gene>
    <name evidence="1" type="primary">rpoC1</name>
</gene>
<dbReference type="EC" id="2.7.7.6" evidence="1"/>
<dbReference type="EMBL" id="AP009374">
    <property type="protein sequence ID" value="BAF50452.1"/>
    <property type="molecule type" value="Genomic_DNA"/>
</dbReference>
<dbReference type="RefSeq" id="YP_001123628.1">
    <property type="nucleotide sequence ID" value="NC_009273.1"/>
</dbReference>
<dbReference type="SMR" id="A4QL97"/>
<dbReference type="GeneID" id="4962076"/>
<dbReference type="GO" id="GO:0009507">
    <property type="term" value="C:chloroplast"/>
    <property type="evidence" value="ECO:0007669"/>
    <property type="project" value="UniProtKB-SubCell"/>
</dbReference>
<dbReference type="GO" id="GO:0000428">
    <property type="term" value="C:DNA-directed RNA polymerase complex"/>
    <property type="evidence" value="ECO:0007669"/>
    <property type="project" value="UniProtKB-KW"/>
</dbReference>
<dbReference type="GO" id="GO:0005739">
    <property type="term" value="C:mitochondrion"/>
    <property type="evidence" value="ECO:0007669"/>
    <property type="project" value="GOC"/>
</dbReference>
<dbReference type="GO" id="GO:0003677">
    <property type="term" value="F:DNA binding"/>
    <property type="evidence" value="ECO:0007669"/>
    <property type="project" value="UniProtKB-UniRule"/>
</dbReference>
<dbReference type="GO" id="GO:0003899">
    <property type="term" value="F:DNA-directed RNA polymerase activity"/>
    <property type="evidence" value="ECO:0007669"/>
    <property type="project" value="UniProtKB-UniRule"/>
</dbReference>
<dbReference type="GO" id="GO:0000287">
    <property type="term" value="F:magnesium ion binding"/>
    <property type="evidence" value="ECO:0007669"/>
    <property type="project" value="UniProtKB-UniRule"/>
</dbReference>
<dbReference type="GO" id="GO:0008270">
    <property type="term" value="F:zinc ion binding"/>
    <property type="evidence" value="ECO:0007669"/>
    <property type="project" value="UniProtKB-UniRule"/>
</dbReference>
<dbReference type="GO" id="GO:0006351">
    <property type="term" value="P:DNA-templated transcription"/>
    <property type="evidence" value="ECO:0007669"/>
    <property type="project" value="UniProtKB-UniRule"/>
</dbReference>
<dbReference type="FunFam" id="1.10.40.90:FF:000002">
    <property type="entry name" value="DNA-directed RNA polymerase subunit"/>
    <property type="match status" value="1"/>
</dbReference>
<dbReference type="FunFam" id="4.10.860.120:FF:000007">
    <property type="entry name" value="DNA-directed RNA polymerase subunit gamma"/>
    <property type="match status" value="1"/>
</dbReference>
<dbReference type="Gene3D" id="1.10.40.90">
    <property type="match status" value="1"/>
</dbReference>
<dbReference type="Gene3D" id="2.40.40.20">
    <property type="match status" value="1"/>
</dbReference>
<dbReference type="Gene3D" id="4.10.860.120">
    <property type="entry name" value="RNA polymerase II, clamp domain"/>
    <property type="match status" value="1"/>
</dbReference>
<dbReference type="Gene3D" id="1.10.274.100">
    <property type="entry name" value="RNA polymerase Rpb1, domain 3"/>
    <property type="match status" value="1"/>
</dbReference>
<dbReference type="HAMAP" id="MF_01323">
    <property type="entry name" value="RNApol_bact_RpoC1"/>
    <property type="match status" value="1"/>
</dbReference>
<dbReference type="InterPro" id="IPR045867">
    <property type="entry name" value="DNA-dir_RpoC_beta_prime"/>
</dbReference>
<dbReference type="InterPro" id="IPR000722">
    <property type="entry name" value="RNA_pol_asu"/>
</dbReference>
<dbReference type="InterPro" id="IPR006592">
    <property type="entry name" value="RNA_pol_N"/>
</dbReference>
<dbReference type="InterPro" id="IPR007080">
    <property type="entry name" value="RNA_pol_Rpb1_1"/>
</dbReference>
<dbReference type="InterPro" id="IPR042102">
    <property type="entry name" value="RNA_pol_Rpb1_3_sf"/>
</dbReference>
<dbReference type="InterPro" id="IPR044893">
    <property type="entry name" value="RNA_pol_Rpb1_clamp_domain"/>
</dbReference>
<dbReference type="InterPro" id="IPR034678">
    <property type="entry name" value="RNApol_RpoC1"/>
</dbReference>
<dbReference type="PANTHER" id="PTHR19376">
    <property type="entry name" value="DNA-DIRECTED RNA POLYMERASE"/>
    <property type="match status" value="1"/>
</dbReference>
<dbReference type="PANTHER" id="PTHR19376:SF54">
    <property type="entry name" value="DNA-DIRECTED RNA POLYMERASE SUBUNIT BETA"/>
    <property type="match status" value="1"/>
</dbReference>
<dbReference type="Pfam" id="PF04997">
    <property type="entry name" value="RNA_pol_Rpb1_1"/>
    <property type="match status" value="1"/>
</dbReference>
<dbReference type="Pfam" id="PF00623">
    <property type="entry name" value="RNA_pol_Rpb1_2"/>
    <property type="match status" value="2"/>
</dbReference>
<dbReference type="SMART" id="SM00663">
    <property type="entry name" value="RPOLA_N"/>
    <property type="match status" value="1"/>
</dbReference>
<dbReference type="SUPFAM" id="SSF64484">
    <property type="entry name" value="beta and beta-prime subunits of DNA dependent RNA-polymerase"/>
    <property type="match status" value="1"/>
</dbReference>
<name>RPOC1_LEPVR</name>
<feature type="chain" id="PRO_0000353496" description="DNA-directed RNA polymerase subunit beta'">
    <location>
        <begin position="1"/>
        <end position="680"/>
    </location>
</feature>
<feature type="binding site" evidence="1">
    <location>
        <position position="69"/>
    </location>
    <ligand>
        <name>Zn(2+)</name>
        <dbReference type="ChEBI" id="CHEBI:29105"/>
    </ligand>
</feature>
<feature type="binding site" evidence="1">
    <location>
        <position position="71"/>
    </location>
    <ligand>
        <name>Zn(2+)</name>
        <dbReference type="ChEBI" id="CHEBI:29105"/>
    </ligand>
</feature>
<feature type="binding site" evidence="1">
    <location>
        <position position="87"/>
    </location>
    <ligand>
        <name>Zn(2+)</name>
        <dbReference type="ChEBI" id="CHEBI:29105"/>
    </ligand>
</feature>
<feature type="binding site" evidence="1">
    <location>
        <position position="90"/>
    </location>
    <ligand>
        <name>Zn(2+)</name>
        <dbReference type="ChEBI" id="CHEBI:29105"/>
    </ligand>
</feature>
<feature type="binding site" evidence="1">
    <location>
        <position position="489"/>
    </location>
    <ligand>
        <name>Mg(2+)</name>
        <dbReference type="ChEBI" id="CHEBI:18420"/>
    </ligand>
</feature>
<feature type="binding site" evidence="1">
    <location>
        <position position="491"/>
    </location>
    <ligand>
        <name>Mg(2+)</name>
        <dbReference type="ChEBI" id="CHEBI:18420"/>
    </ligand>
</feature>
<feature type="binding site" evidence="1">
    <location>
        <position position="493"/>
    </location>
    <ligand>
        <name>Mg(2+)</name>
        <dbReference type="ChEBI" id="CHEBI:18420"/>
    </ligand>
</feature>
<protein>
    <recommendedName>
        <fullName evidence="1">DNA-directed RNA polymerase subunit beta'</fullName>
        <ecNumber evidence="1">2.7.7.6</ecNumber>
    </recommendedName>
    <alternativeName>
        <fullName evidence="1">PEP</fullName>
    </alternativeName>
    <alternativeName>
        <fullName evidence="1">Plastid-encoded RNA polymerase subunit beta'</fullName>
        <shortName evidence="1">RNA polymerase subunit beta'</shortName>
    </alternativeName>
</protein>
<evidence type="ECO:0000255" key="1">
    <source>
        <dbReference type="HAMAP-Rule" id="MF_01323"/>
    </source>
</evidence>
<reference key="1">
    <citation type="submission" date="2007-03" db="EMBL/GenBank/DDBJ databases">
        <title>Sequencing analysis of Lepidium virginicum JO26 chloroplast DNA.</title>
        <authorList>
            <person name="Hosouchi T."/>
            <person name="Tsuruoka H."/>
            <person name="Kotani H."/>
        </authorList>
    </citation>
    <scope>NUCLEOTIDE SEQUENCE [LARGE SCALE GENOMIC DNA]</scope>
</reference>
<keyword id="KW-0150">Chloroplast</keyword>
<keyword id="KW-0240">DNA-directed RNA polymerase</keyword>
<keyword id="KW-0460">Magnesium</keyword>
<keyword id="KW-0479">Metal-binding</keyword>
<keyword id="KW-0548">Nucleotidyltransferase</keyword>
<keyword id="KW-0934">Plastid</keyword>
<keyword id="KW-0804">Transcription</keyword>
<keyword id="KW-0808">Transferase</keyword>
<keyword id="KW-0862">Zinc</keyword>